<comment type="subcellular location">
    <subcellularLocation>
        <location evidence="3">Cell membrane</location>
        <topology evidence="3">Multi-pass membrane protein</topology>
    </subcellularLocation>
</comment>
<comment type="similarity">
    <text evidence="3">Belongs to the AAE transporter (TC 2.A.81) family.</text>
</comment>
<organism>
    <name type="scientific">Desulfotalea psychrophila (strain LSv54 / DSM 12343)</name>
    <dbReference type="NCBI Taxonomy" id="177439"/>
    <lineage>
        <taxon>Bacteria</taxon>
        <taxon>Pseudomonadati</taxon>
        <taxon>Thermodesulfobacteriota</taxon>
        <taxon>Desulfobulbia</taxon>
        <taxon>Desulfobulbales</taxon>
        <taxon>Desulfocapsaceae</taxon>
        <taxon>Desulfotalea</taxon>
    </lineage>
</organism>
<name>Y386_DESPS</name>
<feature type="chain" id="PRO_0000208771" description="Uncharacterized transporter DP0386">
    <location>
        <begin position="1"/>
        <end position="669"/>
    </location>
</feature>
<feature type="transmembrane region" description="Helical" evidence="1">
    <location>
        <begin position="39"/>
        <end position="61"/>
    </location>
</feature>
<feature type="transmembrane region" description="Helical" evidence="1">
    <location>
        <begin position="124"/>
        <end position="146"/>
    </location>
</feature>
<feature type="transmembrane region" description="Helical" evidence="1">
    <location>
        <begin position="153"/>
        <end position="175"/>
    </location>
</feature>
<feature type="transmembrane region" description="Helical" evidence="1">
    <location>
        <begin position="190"/>
        <end position="212"/>
    </location>
</feature>
<feature type="transmembrane region" description="Helical" evidence="1">
    <location>
        <begin position="221"/>
        <end position="243"/>
    </location>
</feature>
<feature type="transmembrane region" description="Helical" evidence="1">
    <location>
        <begin position="263"/>
        <end position="285"/>
    </location>
</feature>
<feature type="transmembrane region" description="Helical" evidence="1">
    <location>
        <begin position="484"/>
        <end position="506"/>
    </location>
</feature>
<feature type="transmembrane region" description="Helical" evidence="1">
    <location>
        <begin position="516"/>
        <end position="538"/>
    </location>
</feature>
<feature type="transmembrane region" description="Helical" evidence="1">
    <location>
        <begin position="558"/>
        <end position="580"/>
    </location>
</feature>
<feature type="transmembrane region" description="Helical" evidence="1">
    <location>
        <begin position="585"/>
        <end position="607"/>
    </location>
</feature>
<feature type="transmembrane region" description="Helical" evidence="1">
    <location>
        <begin position="645"/>
        <end position="667"/>
    </location>
</feature>
<feature type="domain" description="RCK C-terminal 1" evidence="2">
    <location>
        <begin position="316"/>
        <end position="397"/>
    </location>
</feature>
<feature type="domain" description="RCK C-terminal 2" evidence="2">
    <location>
        <begin position="398"/>
        <end position="483"/>
    </location>
</feature>
<accession>Q6ARA9</accession>
<keyword id="KW-1003">Cell membrane</keyword>
<keyword id="KW-0472">Membrane</keyword>
<keyword id="KW-1185">Reference proteome</keyword>
<keyword id="KW-0677">Repeat</keyword>
<keyword id="KW-0812">Transmembrane</keyword>
<keyword id="KW-1133">Transmembrane helix</keyword>
<keyword id="KW-0813">Transport</keyword>
<sequence>MKSSLAVLSTARSDTTTTYIGRNQMIAPMAFQAKRSTFLCPLLVALAILFSLTAVSSGTSWAKDHAGSSQATVSAVAGDNQAVTAKGEVKNSFAPIKTCFNFLKEQPFVFILLALAIGYPLGKISLWGISLGPTAGTLLVGVLISIIGQNIFGIIYGIPSIVSTIFLLMFMYALGLKVGPQFFSGLKTGGLAFIVIGLIVWSLNWLICFFGVKLAGLEAGFAPGIISGSYTITAIIGVAQTALTNGAYTPPPGVSTEQIGANIAAGYAISYVLSNIGIILLIRYLPQIFGHDPIADAQLAEKELSGGATDPVPGAAGSLSLGFSHFDLRAYEVDHQEIIGKTVQEFFHLYPEAPILRVVRQGKLLNLSENNPIKRGDIVSVRADVHELIADGKKLIGKESDSILARDVPIEVADIHIGSRDVAGDTLAELGRSIGFGLQLKALFRFGQELPLLAGTAVQVGDVLRFVGPDFCIQQAAKRLGGRPILNSSITEVMYMAIAMGIGYIFGSLSFNFAGIPFALGTSAGCLLAGIFMSYWRSRNPEFGGPMSEGARSFLQDIGLNLFVAVLAAAVGPKIIESFHGTTAIWVAIIGILGALVPPLVAFVVGIKVFKLNSVVAAGASTGARNSTPGLNAICEQSQSAVAAVPYPLTYALTTVLALVGGYFAMLLS</sequence>
<evidence type="ECO:0000255" key="1"/>
<evidence type="ECO:0000255" key="2">
    <source>
        <dbReference type="PROSITE-ProRule" id="PRU00544"/>
    </source>
</evidence>
<evidence type="ECO:0000305" key="3"/>
<reference key="1">
    <citation type="journal article" date="2004" name="Environ. Microbiol.">
        <title>The genome of Desulfotalea psychrophila, a sulfate-reducing bacterium from permanently cold Arctic sediments.</title>
        <authorList>
            <person name="Rabus R."/>
            <person name="Ruepp A."/>
            <person name="Frickey T."/>
            <person name="Rattei T."/>
            <person name="Fartmann B."/>
            <person name="Stark M."/>
            <person name="Bauer M."/>
            <person name="Zibat A."/>
            <person name="Lombardot T."/>
            <person name="Becker I."/>
            <person name="Amann J."/>
            <person name="Gellner K."/>
            <person name="Teeling H."/>
            <person name="Leuschner W.D."/>
            <person name="Gloeckner F.-O."/>
            <person name="Lupas A.N."/>
            <person name="Amann R."/>
            <person name="Klenk H.-P."/>
        </authorList>
    </citation>
    <scope>NUCLEOTIDE SEQUENCE [LARGE SCALE GENOMIC DNA]</scope>
    <source>
        <strain>DSM 12343 / LSv54</strain>
    </source>
</reference>
<proteinExistence type="inferred from homology"/>
<protein>
    <recommendedName>
        <fullName>Uncharacterized transporter DP0386</fullName>
    </recommendedName>
</protein>
<dbReference type="EMBL" id="CR522870">
    <property type="protein sequence ID" value="CAG35115.1"/>
    <property type="molecule type" value="Genomic_DNA"/>
</dbReference>
<dbReference type="RefSeq" id="WP_011187631.1">
    <property type="nucleotide sequence ID" value="NC_006138.1"/>
</dbReference>
<dbReference type="SMR" id="Q6ARA9"/>
<dbReference type="STRING" id="177439.DP0386"/>
<dbReference type="KEGG" id="dps:DP0386"/>
<dbReference type="eggNOG" id="COG2985">
    <property type="taxonomic scope" value="Bacteria"/>
</dbReference>
<dbReference type="HOGENOM" id="CLU_035023_2_2_7"/>
<dbReference type="OrthoDB" id="5166626at2"/>
<dbReference type="Proteomes" id="UP000000602">
    <property type="component" value="Chromosome"/>
</dbReference>
<dbReference type="GO" id="GO:0005886">
    <property type="term" value="C:plasma membrane"/>
    <property type="evidence" value="ECO:0007669"/>
    <property type="project" value="UniProtKB-SubCell"/>
</dbReference>
<dbReference type="GO" id="GO:0008324">
    <property type="term" value="F:monoatomic cation transmembrane transporter activity"/>
    <property type="evidence" value="ECO:0007669"/>
    <property type="project" value="InterPro"/>
</dbReference>
<dbReference type="GO" id="GO:0006813">
    <property type="term" value="P:potassium ion transport"/>
    <property type="evidence" value="ECO:0007669"/>
    <property type="project" value="InterPro"/>
</dbReference>
<dbReference type="InterPro" id="IPR050144">
    <property type="entry name" value="AAE_transporter"/>
</dbReference>
<dbReference type="InterPro" id="IPR006037">
    <property type="entry name" value="RCK_C"/>
</dbReference>
<dbReference type="InterPro" id="IPR036721">
    <property type="entry name" value="RCK_C_sf"/>
</dbReference>
<dbReference type="InterPro" id="IPR006512">
    <property type="entry name" value="YidE_YbjL"/>
</dbReference>
<dbReference type="NCBIfam" id="TIGR01625">
    <property type="entry name" value="YidE_YbjL_dupl"/>
    <property type="match status" value="1"/>
</dbReference>
<dbReference type="PANTHER" id="PTHR30445:SF9">
    <property type="match status" value="1"/>
</dbReference>
<dbReference type="PANTHER" id="PTHR30445">
    <property type="entry name" value="K(+)_H(+) ANTIPORTER SUBUNIT KHTT"/>
    <property type="match status" value="1"/>
</dbReference>
<dbReference type="Pfam" id="PF06826">
    <property type="entry name" value="Asp-Al_Ex"/>
    <property type="match status" value="2"/>
</dbReference>
<dbReference type="SUPFAM" id="SSF116726">
    <property type="entry name" value="TrkA C-terminal domain-like"/>
    <property type="match status" value="1"/>
</dbReference>
<dbReference type="PROSITE" id="PS51202">
    <property type="entry name" value="RCK_C"/>
    <property type="match status" value="2"/>
</dbReference>
<gene>
    <name type="ordered locus">DP0386</name>
</gene>